<protein>
    <recommendedName>
        <fullName>Ethylene-responsive transcription factor ERF107</fullName>
    </recommendedName>
</protein>
<feature type="chain" id="PRO_0000290420" description="Ethylene-responsive transcription factor ERF107">
    <location>
        <begin position="1"/>
        <end position="201"/>
    </location>
</feature>
<feature type="DNA-binding region" description="AP2/ERF" evidence="2">
    <location>
        <begin position="106"/>
        <end position="164"/>
    </location>
</feature>
<feature type="region of interest" description="Disordered" evidence="3">
    <location>
        <begin position="73"/>
        <end position="105"/>
    </location>
</feature>
<feature type="region of interest" description="Disordered" evidence="3">
    <location>
        <begin position="169"/>
        <end position="201"/>
    </location>
</feature>
<feature type="compositionally biased region" description="Low complexity" evidence="3">
    <location>
        <begin position="74"/>
        <end position="92"/>
    </location>
</feature>
<feature type="compositionally biased region" description="Low complexity" evidence="3">
    <location>
        <begin position="191"/>
        <end position="201"/>
    </location>
</feature>
<feature type="sequence conflict" description="In Ref. 4; AAM63150." evidence="4" ref="4">
    <original>M</original>
    <variation>R</variation>
    <location>
        <position position="73"/>
    </location>
</feature>
<feature type="sequence conflict" description="In Ref. 4; AAM63150." evidence="4" ref="4">
    <original>S</original>
    <variation>T</variation>
    <location>
        <position position="82"/>
    </location>
</feature>
<feature type="sequence conflict" description="In Ref. 4; AAM63150." evidence="4" ref="4">
    <original>V</original>
    <variation>L</variation>
    <location>
        <position position="185"/>
    </location>
</feature>
<evidence type="ECO:0000250" key="1"/>
<evidence type="ECO:0000255" key="2">
    <source>
        <dbReference type="PROSITE-ProRule" id="PRU00366"/>
    </source>
</evidence>
<evidence type="ECO:0000256" key="3">
    <source>
        <dbReference type="SAM" id="MobiDB-lite"/>
    </source>
</evidence>
<evidence type="ECO:0000305" key="4"/>
<reference key="1">
    <citation type="journal article" date="1998" name="DNA Res.">
        <title>Structural analysis of Arabidopsis thaliana chromosome 5. VI. Sequence features of the regions of 1,367,185 bp covered by 19 physically assigned P1 and TAC clones.</title>
        <authorList>
            <person name="Kotani H."/>
            <person name="Nakamura Y."/>
            <person name="Sato S."/>
            <person name="Asamizu E."/>
            <person name="Kaneko T."/>
            <person name="Miyajima N."/>
            <person name="Tabata S."/>
        </authorList>
    </citation>
    <scope>NUCLEOTIDE SEQUENCE [LARGE SCALE GENOMIC DNA]</scope>
    <source>
        <strain>cv. Columbia</strain>
    </source>
</reference>
<reference key="2">
    <citation type="journal article" date="2017" name="Plant J.">
        <title>Araport11: a complete reannotation of the Arabidopsis thaliana reference genome.</title>
        <authorList>
            <person name="Cheng C.Y."/>
            <person name="Krishnakumar V."/>
            <person name="Chan A.P."/>
            <person name="Thibaud-Nissen F."/>
            <person name="Schobel S."/>
            <person name="Town C.D."/>
        </authorList>
    </citation>
    <scope>GENOME REANNOTATION</scope>
    <source>
        <strain>cv. Columbia</strain>
    </source>
</reference>
<reference key="3">
    <citation type="journal article" date="2003" name="Science">
        <title>Empirical analysis of transcriptional activity in the Arabidopsis genome.</title>
        <authorList>
            <person name="Yamada K."/>
            <person name="Lim J."/>
            <person name="Dale J.M."/>
            <person name="Chen H."/>
            <person name="Shinn P."/>
            <person name="Palm C.J."/>
            <person name="Southwick A.M."/>
            <person name="Wu H.C."/>
            <person name="Kim C.J."/>
            <person name="Nguyen M."/>
            <person name="Pham P.K."/>
            <person name="Cheuk R.F."/>
            <person name="Karlin-Newmann G."/>
            <person name="Liu S.X."/>
            <person name="Lam B."/>
            <person name="Sakano H."/>
            <person name="Wu T."/>
            <person name="Yu G."/>
            <person name="Miranda M."/>
            <person name="Quach H.L."/>
            <person name="Tripp M."/>
            <person name="Chang C.H."/>
            <person name="Lee J.M."/>
            <person name="Toriumi M.J."/>
            <person name="Chan M.M."/>
            <person name="Tang C.C."/>
            <person name="Onodera C.S."/>
            <person name="Deng J.M."/>
            <person name="Akiyama K."/>
            <person name="Ansari Y."/>
            <person name="Arakawa T."/>
            <person name="Banh J."/>
            <person name="Banno F."/>
            <person name="Bowser L."/>
            <person name="Brooks S.Y."/>
            <person name="Carninci P."/>
            <person name="Chao Q."/>
            <person name="Choy N."/>
            <person name="Enju A."/>
            <person name="Goldsmith A.D."/>
            <person name="Gurjal M."/>
            <person name="Hansen N.F."/>
            <person name="Hayashizaki Y."/>
            <person name="Johnson-Hopson C."/>
            <person name="Hsuan V.W."/>
            <person name="Iida K."/>
            <person name="Karnes M."/>
            <person name="Khan S."/>
            <person name="Koesema E."/>
            <person name="Ishida J."/>
            <person name="Jiang P.X."/>
            <person name="Jones T."/>
            <person name="Kawai J."/>
            <person name="Kamiya A."/>
            <person name="Meyers C."/>
            <person name="Nakajima M."/>
            <person name="Narusaka M."/>
            <person name="Seki M."/>
            <person name="Sakurai T."/>
            <person name="Satou M."/>
            <person name="Tamse R."/>
            <person name="Vaysberg M."/>
            <person name="Wallender E.K."/>
            <person name="Wong C."/>
            <person name="Yamamura Y."/>
            <person name="Yuan S."/>
            <person name="Shinozaki K."/>
            <person name="Davis R.W."/>
            <person name="Theologis A."/>
            <person name="Ecker J.R."/>
        </authorList>
    </citation>
    <scope>NUCLEOTIDE SEQUENCE [LARGE SCALE MRNA]</scope>
    <source>
        <strain>cv. Columbia</strain>
    </source>
</reference>
<reference key="4">
    <citation type="submission" date="2002-03" db="EMBL/GenBank/DDBJ databases">
        <title>Full-length cDNA from Arabidopsis thaliana.</title>
        <authorList>
            <person name="Brover V.V."/>
            <person name="Troukhan M.E."/>
            <person name="Alexandrov N.A."/>
            <person name="Lu Y.-P."/>
            <person name="Flavell R.B."/>
            <person name="Feldmann K.A."/>
        </authorList>
    </citation>
    <scope>NUCLEOTIDE SEQUENCE [LARGE SCALE MRNA]</scope>
</reference>
<reference key="5">
    <citation type="journal article" date="2006" name="Plant Physiol.">
        <title>Genome-wide analysis of the ERF gene family in Arabidopsis and rice.</title>
        <authorList>
            <person name="Nakano T."/>
            <person name="Suzuki K."/>
            <person name="Fujimura T."/>
            <person name="Shinshi H."/>
        </authorList>
    </citation>
    <scope>GENE FAMILY</scope>
    <scope>NOMENCLATURE</scope>
</reference>
<organism>
    <name type="scientific">Arabidopsis thaliana</name>
    <name type="common">Mouse-ear cress</name>
    <dbReference type="NCBI Taxonomy" id="3702"/>
    <lineage>
        <taxon>Eukaryota</taxon>
        <taxon>Viridiplantae</taxon>
        <taxon>Streptophyta</taxon>
        <taxon>Embryophyta</taxon>
        <taxon>Tracheophyta</taxon>
        <taxon>Spermatophyta</taxon>
        <taxon>Magnoliopsida</taxon>
        <taxon>eudicotyledons</taxon>
        <taxon>Gunneridae</taxon>
        <taxon>Pentapetalae</taxon>
        <taxon>rosids</taxon>
        <taxon>malvids</taxon>
        <taxon>Brassicales</taxon>
        <taxon>Brassicaceae</taxon>
        <taxon>Camelineae</taxon>
        <taxon>Arabidopsis</taxon>
    </lineage>
</organism>
<keyword id="KW-0010">Activator</keyword>
<keyword id="KW-0238">DNA-binding</keyword>
<keyword id="KW-0936">Ethylene signaling pathway</keyword>
<keyword id="KW-0539">Nucleus</keyword>
<keyword id="KW-1185">Reference proteome</keyword>
<keyword id="KW-0804">Transcription</keyword>
<keyword id="KW-0805">Transcription regulation</keyword>
<accession>Q9FKG2</accession>
<accession>Q8LDL4</accession>
<dbReference type="EMBL" id="AB012239">
    <property type="protein sequence ID" value="BAB09003.1"/>
    <property type="molecule type" value="Genomic_DNA"/>
</dbReference>
<dbReference type="EMBL" id="CP002688">
    <property type="protein sequence ID" value="AED97494.1"/>
    <property type="molecule type" value="Genomic_DNA"/>
</dbReference>
<dbReference type="EMBL" id="AY045968">
    <property type="protein sequence ID" value="AAK76642.1"/>
    <property type="molecule type" value="mRNA"/>
</dbReference>
<dbReference type="EMBL" id="AY079321">
    <property type="protein sequence ID" value="AAL85052.1"/>
    <property type="molecule type" value="mRNA"/>
</dbReference>
<dbReference type="EMBL" id="AY085939">
    <property type="protein sequence ID" value="AAM63150.1"/>
    <property type="molecule type" value="mRNA"/>
</dbReference>
<dbReference type="RefSeq" id="NP_200967.1">
    <property type="nucleotide sequence ID" value="NM_125552.3"/>
</dbReference>
<dbReference type="SMR" id="Q9FKG2"/>
<dbReference type="BioGRID" id="21524">
    <property type="interactions" value="41"/>
</dbReference>
<dbReference type="FunCoup" id="Q9FKG2">
    <property type="interactions" value="43"/>
</dbReference>
<dbReference type="IntAct" id="Q9FKG2">
    <property type="interactions" value="44"/>
</dbReference>
<dbReference type="STRING" id="3702.Q9FKG2"/>
<dbReference type="PaxDb" id="3702-AT5G61590.1"/>
<dbReference type="ProteomicsDB" id="247070"/>
<dbReference type="EnsemblPlants" id="AT5G61590.1">
    <property type="protein sequence ID" value="AT5G61590.1"/>
    <property type="gene ID" value="AT5G61590"/>
</dbReference>
<dbReference type="GeneID" id="836280"/>
<dbReference type="Gramene" id="AT5G61590.1">
    <property type="protein sequence ID" value="AT5G61590.1"/>
    <property type="gene ID" value="AT5G61590"/>
</dbReference>
<dbReference type="KEGG" id="ath:AT5G61590"/>
<dbReference type="Araport" id="AT5G61590"/>
<dbReference type="TAIR" id="AT5G61590">
    <property type="gene designation" value="DEWAX"/>
</dbReference>
<dbReference type="eggNOG" id="ENOG502RZ4F">
    <property type="taxonomic scope" value="Eukaryota"/>
</dbReference>
<dbReference type="HOGENOM" id="CLU_058713_0_2_1"/>
<dbReference type="InParanoid" id="Q9FKG2"/>
<dbReference type="OMA" id="FMEDFAF"/>
<dbReference type="PhylomeDB" id="Q9FKG2"/>
<dbReference type="PRO" id="PR:Q9FKG2"/>
<dbReference type="Proteomes" id="UP000006548">
    <property type="component" value="Chromosome 5"/>
</dbReference>
<dbReference type="ExpressionAtlas" id="Q9FKG2">
    <property type="expression patterns" value="baseline and differential"/>
</dbReference>
<dbReference type="GO" id="GO:0005634">
    <property type="term" value="C:nucleus"/>
    <property type="evidence" value="ECO:0000314"/>
    <property type="project" value="TAIR"/>
</dbReference>
<dbReference type="GO" id="GO:0003700">
    <property type="term" value="F:DNA-binding transcription factor activity"/>
    <property type="evidence" value="ECO:0000250"/>
    <property type="project" value="TAIR"/>
</dbReference>
<dbReference type="GO" id="GO:0000976">
    <property type="term" value="F:transcription cis-regulatory region binding"/>
    <property type="evidence" value="ECO:0000314"/>
    <property type="project" value="TAIR"/>
</dbReference>
<dbReference type="GO" id="GO:0009873">
    <property type="term" value="P:ethylene-activated signaling pathway"/>
    <property type="evidence" value="ECO:0007669"/>
    <property type="project" value="UniProtKB-KW"/>
</dbReference>
<dbReference type="GO" id="GO:0019760">
    <property type="term" value="P:glucosinolate metabolic process"/>
    <property type="evidence" value="ECO:0000315"/>
    <property type="project" value="TAIR"/>
</dbReference>
<dbReference type="GO" id="GO:1904277">
    <property type="term" value="P:negative regulation of wax biosynthetic process"/>
    <property type="evidence" value="ECO:0000315"/>
    <property type="project" value="TAIR"/>
</dbReference>
<dbReference type="GO" id="GO:0045893">
    <property type="term" value="P:positive regulation of DNA-templated transcription"/>
    <property type="evidence" value="ECO:0000314"/>
    <property type="project" value="TAIR"/>
</dbReference>
<dbReference type="GO" id="GO:0009414">
    <property type="term" value="P:response to water deprivation"/>
    <property type="evidence" value="ECO:0000270"/>
    <property type="project" value="TAIR"/>
</dbReference>
<dbReference type="CDD" id="cd00018">
    <property type="entry name" value="AP2"/>
    <property type="match status" value="1"/>
</dbReference>
<dbReference type="FunFam" id="3.30.730.10:FF:000001">
    <property type="entry name" value="Ethylene-responsive transcription factor 2"/>
    <property type="match status" value="1"/>
</dbReference>
<dbReference type="Gene3D" id="3.30.730.10">
    <property type="entry name" value="AP2/ERF domain"/>
    <property type="match status" value="1"/>
</dbReference>
<dbReference type="InterPro" id="IPR001471">
    <property type="entry name" value="AP2/ERF_dom"/>
</dbReference>
<dbReference type="InterPro" id="IPR036955">
    <property type="entry name" value="AP2/ERF_dom_sf"/>
</dbReference>
<dbReference type="InterPro" id="IPR016177">
    <property type="entry name" value="DNA-bd_dom_sf"/>
</dbReference>
<dbReference type="InterPro" id="IPR044808">
    <property type="entry name" value="ERF_plant"/>
</dbReference>
<dbReference type="PANTHER" id="PTHR31190">
    <property type="entry name" value="DNA-BINDING DOMAIN"/>
    <property type="match status" value="1"/>
</dbReference>
<dbReference type="PANTHER" id="PTHR31190:SF499">
    <property type="entry name" value="ETHYLENE-RESPONSIVE TRANSCRIPTION FACTOR ERF105"/>
    <property type="match status" value="1"/>
</dbReference>
<dbReference type="Pfam" id="PF00847">
    <property type="entry name" value="AP2"/>
    <property type="match status" value="1"/>
</dbReference>
<dbReference type="PRINTS" id="PR00367">
    <property type="entry name" value="ETHRSPELEMNT"/>
</dbReference>
<dbReference type="SMART" id="SM00380">
    <property type="entry name" value="AP2"/>
    <property type="match status" value="1"/>
</dbReference>
<dbReference type="SUPFAM" id="SSF54171">
    <property type="entry name" value="DNA-binding domain"/>
    <property type="match status" value="1"/>
</dbReference>
<dbReference type="PROSITE" id="PS51032">
    <property type="entry name" value="AP2_ERF"/>
    <property type="match status" value="1"/>
</dbReference>
<gene>
    <name type="primary">ERF107</name>
    <name type="ordered locus">At5g61590</name>
    <name type="ORF">K11J9.12</name>
</gene>
<name>EF107_ARATH</name>
<sequence length="201" mass="22727">METFEESSDLDVIQKHLFEDLMIPDGFIEDFVFDDTAFVSGLWSLEPFNPVPKLEPSSPVLDPDSYVQEILQMEAESSSSSSTTTSPEVETVSNRKKTKRFEETRHYRGVRRRPWGKFAAEIRDPAKKGSRIWLGTFESDIDAARAYDYAAFKLRGRKAVLNFPLDAGKYDAPVNSCRKRRRTDVPQPQGTTTSTSSSSSN</sequence>
<proteinExistence type="evidence at transcript level"/>
<comment type="function">
    <text evidence="1">Probably acts as a transcriptional activator. Binds to the GCC-box pathogenesis-related promoter element. May be involved in the regulation of gene expression by stress factors and by components of stress signal transduction pathways (By similarity).</text>
</comment>
<comment type="subcellular location">
    <subcellularLocation>
        <location evidence="4">Nucleus</location>
    </subcellularLocation>
</comment>
<comment type="similarity">
    <text evidence="4">Belongs to the AP2/ERF transcription factor family. ERF subfamily.</text>
</comment>